<proteinExistence type="evidence at protein level"/>
<accession>P13270</accession>
<name>LABA_JATMU</name>
<keyword id="KW-0903">Direct protein sequencing</keyword>
<protein>
    <recommendedName>
        <fullName>Labaditin</fullName>
    </recommendedName>
</protein>
<comment type="function">
    <text>Labaditin is an active peptide which inhibits the classical pathway of complement activation in vitro. Activity seems to be based on an interaction with C1.</text>
</comment>
<comment type="PTM">
    <text>This is a cyclic peptide.</text>
</comment>
<comment type="miscellaneous">
    <text>Latex of this plant is used in folkloric medicine for treatment of infected wounds, skins infections and scabies.</text>
</comment>
<reference key="1">
    <citation type="journal article" date="1989" name="FEBS Lett.">
        <title>Labaditin, a novel cyclic decapeptide from the latex of Jatropha multifida L. (Euphorbiaceae). Isolation and sequence determination by means of two-dimensional NMR.</title>
        <authorList>
            <person name="Kosasi S."/>
            <person name="van der Sluis W.G."/>
            <person name="Boelens R."/>
            <person name="T'Hart L.A."/>
            <person name="Labadie R.P."/>
        </authorList>
    </citation>
    <scope>PROTEIN SEQUENCE</scope>
    <scope>CROSS-LINK</scope>
    <source>
        <tissue>Latex</tissue>
    </source>
</reference>
<sequence>AGVWTVWGTI</sequence>
<organism>
    <name type="scientific">Jatropha multifida</name>
    <name type="common">Coralbush</name>
    <dbReference type="NCBI Taxonomy" id="3996"/>
    <lineage>
        <taxon>Eukaryota</taxon>
        <taxon>Viridiplantae</taxon>
        <taxon>Streptophyta</taxon>
        <taxon>Embryophyta</taxon>
        <taxon>Tracheophyta</taxon>
        <taxon>Spermatophyta</taxon>
        <taxon>Magnoliopsida</taxon>
        <taxon>eudicotyledons</taxon>
        <taxon>Gunneridae</taxon>
        <taxon>Pentapetalae</taxon>
        <taxon>rosids</taxon>
        <taxon>fabids</taxon>
        <taxon>Malpighiales</taxon>
        <taxon>Euphorbiaceae</taxon>
        <taxon>Crotonoideae</taxon>
        <taxon>Jatropheae</taxon>
        <taxon>Jatropha</taxon>
    </lineage>
</organism>
<feature type="peptide" id="PRO_0000044151" description="Labaditin">
    <location>
        <begin position="1"/>
        <end position="10"/>
    </location>
</feature>
<feature type="cross-link" description="Cyclopeptide (Ala-Ile)">
    <location>
        <begin position="1"/>
        <end position="10"/>
    </location>
</feature>